<accession>P57245</accession>
<dbReference type="EC" id="6.3.5.5" evidence="1"/>
<dbReference type="EMBL" id="BA000003">
    <property type="protein sequence ID" value="BAB12863.1"/>
    <property type="molecule type" value="Genomic_DNA"/>
</dbReference>
<dbReference type="RefSeq" id="NP_239977.1">
    <property type="nucleotide sequence ID" value="NC_002528.1"/>
</dbReference>
<dbReference type="RefSeq" id="WP_010895971.1">
    <property type="nucleotide sequence ID" value="NC_002528.1"/>
</dbReference>
<dbReference type="SMR" id="P57245"/>
<dbReference type="STRING" id="563178.BUAP5A_143"/>
<dbReference type="EnsemblBacteria" id="BAB12863">
    <property type="protein sequence ID" value="BAB12863"/>
    <property type="gene ID" value="BAB12863"/>
</dbReference>
<dbReference type="KEGG" id="buc:BU145"/>
<dbReference type="PATRIC" id="fig|107806.10.peg.154"/>
<dbReference type="eggNOG" id="COG0505">
    <property type="taxonomic scope" value="Bacteria"/>
</dbReference>
<dbReference type="HOGENOM" id="CLU_035901_2_1_6"/>
<dbReference type="UniPathway" id="UPA00068">
    <property type="reaction ID" value="UER00171"/>
</dbReference>
<dbReference type="UniPathway" id="UPA00070">
    <property type="reaction ID" value="UER00115"/>
</dbReference>
<dbReference type="Proteomes" id="UP000001806">
    <property type="component" value="Chromosome"/>
</dbReference>
<dbReference type="GO" id="GO:0005524">
    <property type="term" value="F:ATP binding"/>
    <property type="evidence" value="ECO:0007669"/>
    <property type="project" value="UniProtKB-UniRule"/>
</dbReference>
<dbReference type="GO" id="GO:0004088">
    <property type="term" value="F:carbamoyl-phosphate synthase (glutamine-hydrolyzing) activity"/>
    <property type="evidence" value="ECO:0007669"/>
    <property type="project" value="UniProtKB-UniRule"/>
</dbReference>
<dbReference type="GO" id="GO:0004359">
    <property type="term" value="F:glutaminase activity"/>
    <property type="evidence" value="ECO:0007669"/>
    <property type="project" value="RHEA"/>
</dbReference>
<dbReference type="GO" id="GO:0006207">
    <property type="term" value="P:'de novo' pyrimidine nucleobase biosynthetic process"/>
    <property type="evidence" value="ECO:0007669"/>
    <property type="project" value="InterPro"/>
</dbReference>
<dbReference type="GO" id="GO:0044205">
    <property type="term" value="P:'de novo' UMP biosynthetic process"/>
    <property type="evidence" value="ECO:0007669"/>
    <property type="project" value="UniProtKB-UniRule"/>
</dbReference>
<dbReference type="GO" id="GO:0006541">
    <property type="term" value="P:glutamine metabolic process"/>
    <property type="evidence" value="ECO:0007669"/>
    <property type="project" value="InterPro"/>
</dbReference>
<dbReference type="GO" id="GO:0006526">
    <property type="term" value="P:L-arginine biosynthetic process"/>
    <property type="evidence" value="ECO:0007669"/>
    <property type="project" value="UniProtKB-UniRule"/>
</dbReference>
<dbReference type="CDD" id="cd01744">
    <property type="entry name" value="GATase1_CPSase"/>
    <property type="match status" value="1"/>
</dbReference>
<dbReference type="FunFam" id="3.40.50.880:FF:000011">
    <property type="entry name" value="Carbamoyl-phosphate synthase small chain"/>
    <property type="match status" value="1"/>
</dbReference>
<dbReference type="FunFam" id="3.50.30.20:FF:000001">
    <property type="entry name" value="Carbamoyl-phosphate synthase small chain"/>
    <property type="match status" value="1"/>
</dbReference>
<dbReference type="Gene3D" id="3.40.50.880">
    <property type="match status" value="1"/>
</dbReference>
<dbReference type="Gene3D" id="3.50.30.20">
    <property type="entry name" value="Carbamoyl-phosphate synthase small subunit, N-terminal domain"/>
    <property type="match status" value="1"/>
</dbReference>
<dbReference type="HAMAP" id="MF_01209">
    <property type="entry name" value="CPSase_S_chain"/>
    <property type="match status" value="1"/>
</dbReference>
<dbReference type="InterPro" id="IPR050472">
    <property type="entry name" value="Anth_synth/Amidotransfase"/>
</dbReference>
<dbReference type="InterPro" id="IPR006274">
    <property type="entry name" value="CarbamoylP_synth_ssu"/>
</dbReference>
<dbReference type="InterPro" id="IPR002474">
    <property type="entry name" value="CarbamoylP_synth_ssu_N"/>
</dbReference>
<dbReference type="InterPro" id="IPR036480">
    <property type="entry name" value="CarbP_synth_ssu_N_sf"/>
</dbReference>
<dbReference type="InterPro" id="IPR029062">
    <property type="entry name" value="Class_I_gatase-like"/>
</dbReference>
<dbReference type="InterPro" id="IPR035686">
    <property type="entry name" value="CPSase_GATase1"/>
</dbReference>
<dbReference type="InterPro" id="IPR017926">
    <property type="entry name" value="GATASE"/>
</dbReference>
<dbReference type="NCBIfam" id="TIGR01368">
    <property type="entry name" value="CPSaseIIsmall"/>
    <property type="match status" value="1"/>
</dbReference>
<dbReference type="NCBIfam" id="NF009475">
    <property type="entry name" value="PRK12838.1"/>
    <property type="match status" value="1"/>
</dbReference>
<dbReference type="PANTHER" id="PTHR43418:SF7">
    <property type="entry name" value="CARBAMOYL-PHOSPHATE SYNTHASE SMALL CHAIN"/>
    <property type="match status" value="1"/>
</dbReference>
<dbReference type="PANTHER" id="PTHR43418">
    <property type="entry name" value="MULTIFUNCTIONAL TRYPTOPHAN BIOSYNTHESIS PROTEIN-RELATED"/>
    <property type="match status" value="1"/>
</dbReference>
<dbReference type="Pfam" id="PF00988">
    <property type="entry name" value="CPSase_sm_chain"/>
    <property type="match status" value="1"/>
</dbReference>
<dbReference type="Pfam" id="PF00117">
    <property type="entry name" value="GATase"/>
    <property type="match status" value="1"/>
</dbReference>
<dbReference type="PRINTS" id="PR00097">
    <property type="entry name" value="ANTSNTHASEII"/>
</dbReference>
<dbReference type="PRINTS" id="PR00099">
    <property type="entry name" value="CPSGATASE"/>
</dbReference>
<dbReference type="PRINTS" id="PR00096">
    <property type="entry name" value="GATASE"/>
</dbReference>
<dbReference type="SMART" id="SM01097">
    <property type="entry name" value="CPSase_sm_chain"/>
    <property type="match status" value="1"/>
</dbReference>
<dbReference type="SUPFAM" id="SSF52021">
    <property type="entry name" value="Carbamoyl phosphate synthetase, small subunit N-terminal domain"/>
    <property type="match status" value="1"/>
</dbReference>
<dbReference type="SUPFAM" id="SSF52317">
    <property type="entry name" value="Class I glutamine amidotransferase-like"/>
    <property type="match status" value="1"/>
</dbReference>
<dbReference type="PROSITE" id="PS51273">
    <property type="entry name" value="GATASE_TYPE_1"/>
    <property type="match status" value="1"/>
</dbReference>
<keyword id="KW-0028">Amino-acid biosynthesis</keyword>
<keyword id="KW-0055">Arginine biosynthesis</keyword>
<keyword id="KW-0067">ATP-binding</keyword>
<keyword id="KW-0315">Glutamine amidotransferase</keyword>
<keyword id="KW-0436">Ligase</keyword>
<keyword id="KW-0547">Nucleotide-binding</keyword>
<keyword id="KW-0665">Pyrimidine biosynthesis</keyword>
<keyword id="KW-1185">Reference proteome</keyword>
<gene>
    <name evidence="1" type="primary">carA</name>
    <name type="ordered locus">BU145</name>
</gene>
<organism>
    <name type="scientific">Buchnera aphidicola subsp. Acyrthosiphon pisum (strain APS)</name>
    <name type="common">Acyrthosiphon pisum symbiotic bacterium</name>
    <dbReference type="NCBI Taxonomy" id="107806"/>
    <lineage>
        <taxon>Bacteria</taxon>
        <taxon>Pseudomonadati</taxon>
        <taxon>Pseudomonadota</taxon>
        <taxon>Gammaproteobacteria</taxon>
        <taxon>Enterobacterales</taxon>
        <taxon>Erwiniaceae</taxon>
        <taxon>Buchnera</taxon>
    </lineage>
</organism>
<protein>
    <recommendedName>
        <fullName evidence="1">Carbamoyl phosphate synthase small chain</fullName>
        <ecNumber evidence="1">6.3.5.5</ecNumber>
    </recommendedName>
    <alternativeName>
        <fullName evidence="1">Carbamoyl phosphate synthetase glutamine chain</fullName>
    </alternativeName>
</protein>
<evidence type="ECO:0000255" key="1">
    <source>
        <dbReference type="HAMAP-Rule" id="MF_01209"/>
    </source>
</evidence>
<reference key="1">
    <citation type="journal article" date="2000" name="Nature">
        <title>Genome sequence of the endocellular bacterial symbiont of aphids Buchnera sp. APS.</title>
        <authorList>
            <person name="Shigenobu S."/>
            <person name="Watanabe H."/>
            <person name="Hattori M."/>
            <person name="Sakaki Y."/>
            <person name="Ishikawa H."/>
        </authorList>
    </citation>
    <scope>NUCLEOTIDE SEQUENCE [LARGE SCALE GENOMIC DNA]</scope>
    <source>
        <strain>APS</strain>
    </source>
</reference>
<name>CARA_BUCAI</name>
<comment type="function">
    <text evidence="1">Small subunit of the glutamine-dependent carbamoyl phosphate synthetase (CPSase). CPSase catalyzes the formation of carbamoyl phosphate from the ammonia moiety of glutamine, carbonate, and phosphate donated by ATP, constituting the first step of 2 biosynthetic pathways, one leading to arginine and/or urea and the other to pyrimidine nucleotides. The small subunit (glutamine amidotransferase) binds and cleaves glutamine to supply the large subunit with the substrate ammonia.</text>
</comment>
<comment type="catalytic activity">
    <reaction evidence="1">
        <text>hydrogencarbonate + L-glutamine + 2 ATP + H2O = carbamoyl phosphate + L-glutamate + 2 ADP + phosphate + 2 H(+)</text>
        <dbReference type="Rhea" id="RHEA:18633"/>
        <dbReference type="ChEBI" id="CHEBI:15377"/>
        <dbReference type="ChEBI" id="CHEBI:15378"/>
        <dbReference type="ChEBI" id="CHEBI:17544"/>
        <dbReference type="ChEBI" id="CHEBI:29985"/>
        <dbReference type="ChEBI" id="CHEBI:30616"/>
        <dbReference type="ChEBI" id="CHEBI:43474"/>
        <dbReference type="ChEBI" id="CHEBI:58228"/>
        <dbReference type="ChEBI" id="CHEBI:58359"/>
        <dbReference type="ChEBI" id="CHEBI:456216"/>
        <dbReference type="EC" id="6.3.5.5"/>
    </reaction>
</comment>
<comment type="catalytic activity">
    <molecule>Carbamoyl phosphate synthase small chain</molecule>
    <reaction evidence="1">
        <text>L-glutamine + H2O = L-glutamate + NH4(+)</text>
        <dbReference type="Rhea" id="RHEA:15889"/>
        <dbReference type="ChEBI" id="CHEBI:15377"/>
        <dbReference type="ChEBI" id="CHEBI:28938"/>
        <dbReference type="ChEBI" id="CHEBI:29985"/>
        <dbReference type="ChEBI" id="CHEBI:58359"/>
    </reaction>
</comment>
<comment type="pathway">
    <text evidence="1">Amino-acid biosynthesis; L-arginine biosynthesis; carbamoyl phosphate from bicarbonate: step 1/1.</text>
</comment>
<comment type="pathway">
    <text evidence="1">Pyrimidine metabolism; UMP biosynthesis via de novo pathway; (S)-dihydroorotate from bicarbonate: step 1/3.</text>
</comment>
<comment type="subunit">
    <text evidence="1">Composed of two chains; the small (or glutamine) chain promotes the hydrolysis of glutamine to ammonia, which is used by the large (or ammonia) chain to synthesize carbamoyl phosphate. Tetramer of heterodimers (alpha,beta)4.</text>
</comment>
<comment type="similarity">
    <text evidence="1">Belongs to the CarA family.</text>
</comment>
<sequence length="387" mass="43020">MEGVLSQLAVLVLEDGTKFHGRAIGAKGITVGEVVFNTSITGYQEIITDPSYSHQIVTLTHPHIGNVGTNSNDEESSKIYIKGLIIRDLSLTASNYRNKKSFSSYLKENNIIAISDIDTRKLTRILRTKGSQNGCIIEDKKQNYSIAYNKAKNFISLQDLDLAKKVSTKSIYNWDQGSFTFKKNNFFSINKQKFLFHVVVYDFGVKRNILRMLVDRGCYLTVVPAITDPKTVLNLSPDGIFLSNGPGDPRPCDYAIHAIQYFLKTNIPIFGICLGHQLLALASGAKIVKMKFGHHGGNHPVKDIKNNRVIITSQNHSFTVDTENLPNNIEITHSSLFDGTLQGLSLTNKSAFSFQGHPEASPGPHDASYLFDYFIKLIVSQKTTLSN</sequence>
<feature type="chain" id="PRO_0000112261" description="Carbamoyl phosphate synthase small chain">
    <location>
        <begin position="1"/>
        <end position="387"/>
    </location>
</feature>
<feature type="domain" description="Glutamine amidotransferase type-1" evidence="1">
    <location>
        <begin position="197"/>
        <end position="384"/>
    </location>
</feature>
<feature type="region of interest" description="CPSase" evidence="1">
    <location>
        <begin position="1"/>
        <end position="196"/>
    </location>
</feature>
<feature type="active site" description="Nucleophile" evidence="1">
    <location>
        <position position="273"/>
    </location>
</feature>
<feature type="active site" evidence="1">
    <location>
        <position position="357"/>
    </location>
</feature>
<feature type="active site" evidence="1">
    <location>
        <position position="359"/>
    </location>
</feature>
<feature type="binding site" evidence="1">
    <location>
        <position position="51"/>
    </location>
    <ligand>
        <name>L-glutamine</name>
        <dbReference type="ChEBI" id="CHEBI:58359"/>
    </ligand>
</feature>
<feature type="binding site" evidence="1">
    <location>
        <position position="245"/>
    </location>
    <ligand>
        <name>L-glutamine</name>
        <dbReference type="ChEBI" id="CHEBI:58359"/>
    </ligand>
</feature>
<feature type="binding site" evidence="1">
    <location>
        <position position="247"/>
    </location>
    <ligand>
        <name>L-glutamine</name>
        <dbReference type="ChEBI" id="CHEBI:58359"/>
    </ligand>
</feature>
<feature type="binding site" evidence="1">
    <location>
        <position position="274"/>
    </location>
    <ligand>
        <name>L-glutamine</name>
        <dbReference type="ChEBI" id="CHEBI:58359"/>
    </ligand>
</feature>
<feature type="binding site" evidence="1">
    <location>
        <position position="277"/>
    </location>
    <ligand>
        <name>L-glutamine</name>
        <dbReference type="ChEBI" id="CHEBI:58359"/>
    </ligand>
</feature>
<feature type="binding site" evidence="1">
    <location>
        <position position="315"/>
    </location>
    <ligand>
        <name>L-glutamine</name>
        <dbReference type="ChEBI" id="CHEBI:58359"/>
    </ligand>
</feature>
<feature type="binding site" evidence="1">
    <location>
        <position position="318"/>
    </location>
    <ligand>
        <name>L-glutamine</name>
        <dbReference type="ChEBI" id="CHEBI:58359"/>
    </ligand>
</feature>
<proteinExistence type="inferred from homology"/>